<proteinExistence type="inferred from homology"/>
<gene>
    <name evidence="1" type="primary">thrS</name>
    <name type="ordered locus">PM0593</name>
</gene>
<comment type="function">
    <text evidence="1">Catalyzes the attachment of threonine to tRNA(Thr) in a two-step reaction: L-threonine is first activated by ATP to form Thr-AMP and then transferred to the acceptor end of tRNA(Thr). Also edits incorrectly charged L-seryl-tRNA(Thr).</text>
</comment>
<comment type="catalytic activity">
    <reaction evidence="1">
        <text>tRNA(Thr) + L-threonine + ATP = L-threonyl-tRNA(Thr) + AMP + diphosphate + H(+)</text>
        <dbReference type="Rhea" id="RHEA:24624"/>
        <dbReference type="Rhea" id="RHEA-COMP:9670"/>
        <dbReference type="Rhea" id="RHEA-COMP:9704"/>
        <dbReference type="ChEBI" id="CHEBI:15378"/>
        <dbReference type="ChEBI" id="CHEBI:30616"/>
        <dbReference type="ChEBI" id="CHEBI:33019"/>
        <dbReference type="ChEBI" id="CHEBI:57926"/>
        <dbReference type="ChEBI" id="CHEBI:78442"/>
        <dbReference type="ChEBI" id="CHEBI:78534"/>
        <dbReference type="ChEBI" id="CHEBI:456215"/>
        <dbReference type="EC" id="6.1.1.3"/>
    </reaction>
</comment>
<comment type="cofactor">
    <cofactor evidence="1">
        <name>Zn(2+)</name>
        <dbReference type="ChEBI" id="CHEBI:29105"/>
    </cofactor>
    <text evidence="1">Binds 1 zinc ion per subunit.</text>
</comment>
<comment type="subunit">
    <text evidence="1">Homodimer.</text>
</comment>
<comment type="subcellular location">
    <subcellularLocation>
        <location evidence="1">Cytoplasm</location>
    </subcellularLocation>
</comment>
<comment type="similarity">
    <text evidence="1">Belongs to the class-II aminoacyl-tRNA synthetase family.</text>
</comment>
<evidence type="ECO:0000255" key="1">
    <source>
        <dbReference type="HAMAP-Rule" id="MF_00184"/>
    </source>
</evidence>
<evidence type="ECO:0000255" key="2">
    <source>
        <dbReference type="PROSITE-ProRule" id="PRU01228"/>
    </source>
</evidence>
<organism>
    <name type="scientific">Pasteurella multocida (strain Pm70)</name>
    <dbReference type="NCBI Taxonomy" id="272843"/>
    <lineage>
        <taxon>Bacteria</taxon>
        <taxon>Pseudomonadati</taxon>
        <taxon>Pseudomonadota</taxon>
        <taxon>Gammaproteobacteria</taxon>
        <taxon>Pasteurellales</taxon>
        <taxon>Pasteurellaceae</taxon>
        <taxon>Pasteurella</taxon>
    </lineage>
</organism>
<accession>P57857</accession>
<feature type="chain" id="PRO_0000101020" description="Threonine--tRNA ligase">
    <location>
        <begin position="1"/>
        <end position="643"/>
    </location>
</feature>
<feature type="domain" description="TGS" evidence="2">
    <location>
        <begin position="1"/>
        <end position="61"/>
    </location>
</feature>
<feature type="region of interest" description="Catalytic" evidence="1">
    <location>
        <begin position="243"/>
        <end position="534"/>
    </location>
</feature>
<feature type="binding site" evidence="1">
    <location>
        <position position="334"/>
    </location>
    <ligand>
        <name>Zn(2+)</name>
        <dbReference type="ChEBI" id="CHEBI:29105"/>
    </ligand>
</feature>
<feature type="binding site" evidence="1">
    <location>
        <position position="385"/>
    </location>
    <ligand>
        <name>Zn(2+)</name>
        <dbReference type="ChEBI" id="CHEBI:29105"/>
    </ligand>
</feature>
<feature type="binding site" evidence="1">
    <location>
        <position position="511"/>
    </location>
    <ligand>
        <name>Zn(2+)</name>
        <dbReference type="ChEBI" id="CHEBI:29105"/>
    </ligand>
</feature>
<reference key="1">
    <citation type="journal article" date="2001" name="Proc. Natl. Acad. Sci. U.S.A.">
        <title>Complete genomic sequence of Pasteurella multocida Pm70.</title>
        <authorList>
            <person name="May B.J."/>
            <person name="Zhang Q."/>
            <person name="Li L.L."/>
            <person name="Paustian M.L."/>
            <person name="Whittam T.S."/>
            <person name="Kapur V."/>
        </authorList>
    </citation>
    <scope>NUCLEOTIDE SEQUENCE [LARGE SCALE GENOMIC DNA]</scope>
    <source>
        <strain>Pm70</strain>
    </source>
</reference>
<sequence>MPIITLPDGSQRQFEQPISVMDVAASIGAGLAKACIAGRVNGERKDACDLITEDSKLEIITAKEEDGLEIIRHSCAHLLGHAIKQLFPNVKMAIGPTIDKGFYYDVDLDRSLTQEDLDALEKRMLELAKTNYDVVKKVVSWQEARDTFEARGEPYKMAILDENIDRCDTPALYHHEEYVDMCRGPHVPNMRFCHHFKLMKVAGAYWRGDSKNKMLQRIYGTAWADKKQLSEYLTRLEEAAKRDHRKIGKALDLYHMQEEAPGMVFWHNDGWTIFRELETFVRTKLKEYDYQEVKGPFMMDRVLWEKTGHWQNYGDLMFTTQSENREYAIKPMNCPGHVQIFNQGLKSYRDLPIRMAEFGSCHRNEPSGSLHGLMRVRGFTQDDAHIFCTEDQIESEVTACIKMVYDIYSTFGFENIQVKLSTRPEKRIGADEMWDRAEAGLAAALSHNGLEYEIQEGEGAFYGPKIEFALRDCLDREWQCGTIQLDFALPGRLNASYVAEDNDRRTPVMIHRAILGSIERFIGIITEEYAGFFPAWLAPTQAIVMNITDSQSDYVQKVVKTLSDAGLRVKSDLRNEKIGFKIREHTLRRVPYMLVCGDKEIEAGKVAVRTRKGADLGTFTIEEFLDILKKQVRSRELKLLGEE</sequence>
<protein>
    <recommendedName>
        <fullName evidence="1">Threonine--tRNA ligase</fullName>
        <ecNumber evidence="1">6.1.1.3</ecNumber>
    </recommendedName>
    <alternativeName>
        <fullName evidence="1">Threonyl-tRNA synthetase</fullName>
        <shortName evidence="1">ThrRS</shortName>
    </alternativeName>
</protein>
<keyword id="KW-0030">Aminoacyl-tRNA synthetase</keyword>
<keyword id="KW-0067">ATP-binding</keyword>
<keyword id="KW-0963">Cytoplasm</keyword>
<keyword id="KW-0436">Ligase</keyword>
<keyword id="KW-0479">Metal-binding</keyword>
<keyword id="KW-0547">Nucleotide-binding</keyword>
<keyword id="KW-0648">Protein biosynthesis</keyword>
<keyword id="KW-1185">Reference proteome</keyword>
<keyword id="KW-0694">RNA-binding</keyword>
<keyword id="KW-0820">tRNA-binding</keyword>
<keyword id="KW-0862">Zinc</keyword>
<name>SYT_PASMU</name>
<dbReference type="EC" id="6.1.1.3" evidence="1"/>
<dbReference type="EMBL" id="AE004439">
    <property type="protein sequence ID" value="AAK02677.1"/>
    <property type="molecule type" value="Genomic_DNA"/>
</dbReference>
<dbReference type="RefSeq" id="WP_010906743.1">
    <property type="nucleotide sequence ID" value="NC_002663.1"/>
</dbReference>
<dbReference type="SMR" id="P57857"/>
<dbReference type="STRING" id="272843.PM0593"/>
<dbReference type="EnsemblBacteria" id="AAK02677">
    <property type="protein sequence ID" value="AAK02677"/>
    <property type="gene ID" value="PM0593"/>
</dbReference>
<dbReference type="KEGG" id="pmu:PM0593"/>
<dbReference type="HOGENOM" id="CLU_008554_0_1_6"/>
<dbReference type="OrthoDB" id="9802304at2"/>
<dbReference type="Proteomes" id="UP000000809">
    <property type="component" value="Chromosome"/>
</dbReference>
<dbReference type="GO" id="GO:0005829">
    <property type="term" value="C:cytosol"/>
    <property type="evidence" value="ECO:0007669"/>
    <property type="project" value="TreeGrafter"/>
</dbReference>
<dbReference type="GO" id="GO:0005524">
    <property type="term" value="F:ATP binding"/>
    <property type="evidence" value="ECO:0007669"/>
    <property type="project" value="UniProtKB-UniRule"/>
</dbReference>
<dbReference type="GO" id="GO:0046872">
    <property type="term" value="F:metal ion binding"/>
    <property type="evidence" value="ECO:0007669"/>
    <property type="project" value="UniProtKB-KW"/>
</dbReference>
<dbReference type="GO" id="GO:0004829">
    <property type="term" value="F:threonine-tRNA ligase activity"/>
    <property type="evidence" value="ECO:0007669"/>
    <property type="project" value="UniProtKB-UniRule"/>
</dbReference>
<dbReference type="GO" id="GO:0000049">
    <property type="term" value="F:tRNA binding"/>
    <property type="evidence" value="ECO:0007669"/>
    <property type="project" value="UniProtKB-KW"/>
</dbReference>
<dbReference type="GO" id="GO:0006435">
    <property type="term" value="P:threonyl-tRNA aminoacylation"/>
    <property type="evidence" value="ECO:0007669"/>
    <property type="project" value="UniProtKB-UniRule"/>
</dbReference>
<dbReference type="CDD" id="cd01667">
    <property type="entry name" value="TGS_ThrRS"/>
    <property type="match status" value="1"/>
</dbReference>
<dbReference type="CDD" id="cd00860">
    <property type="entry name" value="ThrRS_anticodon"/>
    <property type="match status" value="1"/>
</dbReference>
<dbReference type="CDD" id="cd00771">
    <property type="entry name" value="ThrRS_core"/>
    <property type="match status" value="1"/>
</dbReference>
<dbReference type="FunFam" id="3.10.20.30:FF:000005">
    <property type="entry name" value="Threonine--tRNA ligase"/>
    <property type="match status" value="1"/>
</dbReference>
<dbReference type="FunFam" id="3.30.54.20:FF:000002">
    <property type="entry name" value="Threonine--tRNA ligase"/>
    <property type="match status" value="1"/>
</dbReference>
<dbReference type="FunFam" id="3.30.930.10:FF:000002">
    <property type="entry name" value="Threonine--tRNA ligase"/>
    <property type="match status" value="1"/>
</dbReference>
<dbReference type="FunFam" id="3.40.50.800:FF:000001">
    <property type="entry name" value="Threonine--tRNA ligase"/>
    <property type="match status" value="1"/>
</dbReference>
<dbReference type="FunFam" id="3.30.980.10:FF:000005">
    <property type="entry name" value="Threonyl-tRNA synthetase, mitochondrial"/>
    <property type="match status" value="1"/>
</dbReference>
<dbReference type="Gene3D" id="3.10.20.30">
    <property type="match status" value="1"/>
</dbReference>
<dbReference type="Gene3D" id="3.30.54.20">
    <property type="match status" value="1"/>
</dbReference>
<dbReference type="Gene3D" id="3.40.50.800">
    <property type="entry name" value="Anticodon-binding domain"/>
    <property type="match status" value="1"/>
</dbReference>
<dbReference type="Gene3D" id="3.30.930.10">
    <property type="entry name" value="Bira Bifunctional Protein, Domain 2"/>
    <property type="match status" value="1"/>
</dbReference>
<dbReference type="Gene3D" id="3.30.980.10">
    <property type="entry name" value="Threonyl-trna Synthetase, Chain A, domain 2"/>
    <property type="match status" value="1"/>
</dbReference>
<dbReference type="HAMAP" id="MF_00184">
    <property type="entry name" value="Thr_tRNA_synth"/>
    <property type="match status" value="1"/>
</dbReference>
<dbReference type="InterPro" id="IPR002314">
    <property type="entry name" value="aa-tRNA-synt_IIb"/>
</dbReference>
<dbReference type="InterPro" id="IPR006195">
    <property type="entry name" value="aa-tRNA-synth_II"/>
</dbReference>
<dbReference type="InterPro" id="IPR045864">
    <property type="entry name" value="aa-tRNA-synth_II/BPL/LPL"/>
</dbReference>
<dbReference type="InterPro" id="IPR004154">
    <property type="entry name" value="Anticodon-bd"/>
</dbReference>
<dbReference type="InterPro" id="IPR036621">
    <property type="entry name" value="Anticodon-bd_dom_sf"/>
</dbReference>
<dbReference type="InterPro" id="IPR012675">
    <property type="entry name" value="Beta-grasp_dom_sf"/>
</dbReference>
<dbReference type="InterPro" id="IPR004095">
    <property type="entry name" value="TGS"/>
</dbReference>
<dbReference type="InterPro" id="IPR012676">
    <property type="entry name" value="TGS-like"/>
</dbReference>
<dbReference type="InterPro" id="IPR002320">
    <property type="entry name" value="Thr-tRNA-ligase_IIa"/>
</dbReference>
<dbReference type="InterPro" id="IPR018163">
    <property type="entry name" value="Thr/Ala-tRNA-synth_IIc_edit"/>
</dbReference>
<dbReference type="InterPro" id="IPR047246">
    <property type="entry name" value="ThrRS_anticodon"/>
</dbReference>
<dbReference type="InterPro" id="IPR033728">
    <property type="entry name" value="ThrRS_core"/>
</dbReference>
<dbReference type="InterPro" id="IPR012947">
    <property type="entry name" value="tRNA_SAD"/>
</dbReference>
<dbReference type="NCBIfam" id="TIGR00418">
    <property type="entry name" value="thrS"/>
    <property type="match status" value="1"/>
</dbReference>
<dbReference type="PANTHER" id="PTHR11451:SF44">
    <property type="entry name" value="THREONINE--TRNA LIGASE, CHLOROPLASTIC_MITOCHONDRIAL 2"/>
    <property type="match status" value="1"/>
</dbReference>
<dbReference type="PANTHER" id="PTHR11451">
    <property type="entry name" value="THREONINE-TRNA LIGASE"/>
    <property type="match status" value="1"/>
</dbReference>
<dbReference type="Pfam" id="PF03129">
    <property type="entry name" value="HGTP_anticodon"/>
    <property type="match status" value="1"/>
</dbReference>
<dbReference type="Pfam" id="PF02824">
    <property type="entry name" value="TGS"/>
    <property type="match status" value="1"/>
</dbReference>
<dbReference type="Pfam" id="PF00587">
    <property type="entry name" value="tRNA-synt_2b"/>
    <property type="match status" value="1"/>
</dbReference>
<dbReference type="Pfam" id="PF07973">
    <property type="entry name" value="tRNA_SAD"/>
    <property type="match status" value="1"/>
</dbReference>
<dbReference type="PRINTS" id="PR01047">
    <property type="entry name" value="TRNASYNTHTHR"/>
</dbReference>
<dbReference type="SMART" id="SM00863">
    <property type="entry name" value="tRNA_SAD"/>
    <property type="match status" value="1"/>
</dbReference>
<dbReference type="SUPFAM" id="SSF52954">
    <property type="entry name" value="Class II aaRS ABD-related"/>
    <property type="match status" value="1"/>
</dbReference>
<dbReference type="SUPFAM" id="SSF55681">
    <property type="entry name" value="Class II aaRS and biotin synthetases"/>
    <property type="match status" value="1"/>
</dbReference>
<dbReference type="SUPFAM" id="SSF81271">
    <property type="entry name" value="TGS-like"/>
    <property type="match status" value="1"/>
</dbReference>
<dbReference type="SUPFAM" id="SSF55186">
    <property type="entry name" value="ThrRS/AlaRS common domain"/>
    <property type="match status" value="1"/>
</dbReference>
<dbReference type="PROSITE" id="PS50862">
    <property type="entry name" value="AA_TRNA_LIGASE_II"/>
    <property type="match status" value="1"/>
</dbReference>
<dbReference type="PROSITE" id="PS51880">
    <property type="entry name" value="TGS"/>
    <property type="match status" value="1"/>
</dbReference>